<keyword id="KW-0007">Acetylation</keyword>
<keyword id="KW-0903">Direct protein sequencing</keyword>
<keyword id="KW-0349">Heme</keyword>
<keyword id="KW-0408">Iron</keyword>
<keyword id="KW-0479">Metal-binding</keyword>
<keyword id="KW-0561">Oxygen transport</keyword>
<keyword id="KW-0597">Phosphoprotein</keyword>
<keyword id="KW-0702">S-nitrosylation</keyword>
<keyword id="KW-0813">Transport</keyword>
<name>HBB_PHOVI</name>
<feature type="chain" id="PRO_0000053069" description="Hemoglobin subunit beta">
    <location>
        <begin position="1"/>
        <end position="146"/>
    </location>
</feature>
<feature type="domain" description="Globin" evidence="3">
    <location>
        <begin position="2"/>
        <end position="146"/>
    </location>
</feature>
<feature type="binding site" description="distal binding residue">
    <location>
        <position position="63"/>
    </location>
    <ligand>
        <name>heme b</name>
        <dbReference type="ChEBI" id="CHEBI:60344"/>
    </ligand>
    <ligandPart>
        <name>Fe</name>
        <dbReference type="ChEBI" id="CHEBI:18248"/>
    </ligandPart>
</feature>
<feature type="binding site" description="proximal binding residue">
    <location>
        <position position="92"/>
    </location>
    <ligand>
        <name>heme b</name>
        <dbReference type="ChEBI" id="CHEBI:60344"/>
    </ligand>
    <ligandPart>
        <name>Fe</name>
        <dbReference type="ChEBI" id="CHEBI:18248"/>
    </ligandPart>
</feature>
<feature type="modified residue" description="N-acetylvaline" evidence="1">
    <location>
        <position position="1"/>
    </location>
</feature>
<feature type="modified residue" description="Phosphothreonine" evidence="2">
    <location>
        <position position="12"/>
    </location>
</feature>
<feature type="modified residue" description="Phosphoserine" evidence="2">
    <location>
        <position position="44"/>
    </location>
</feature>
<feature type="modified residue" description="N6-acetyllysine" evidence="2">
    <location>
        <position position="59"/>
    </location>
</feature>
<feature type="modified residue" description="N6-acetyllysine" evidence="2">
    <location>
        <position position="82"/>
    </location>
</feature>
<feature type="modified residue" description="S-nitrosocysteine" evidence="2">
    <location>
        <position position="93"/>
    </location>
</feature>
<feature type="modified residue" description="N6-acetyllysine" evidence="2">
    <location>
        <position position="144"/>
    </location>
</feature>
<comment type="function">
    <text>Involved in oxygen transport from the lung to the various peripheral tissues.</text>
</comment>
<comment type="subunit">
    <text>Heterotetramer of two alpha chains and two beta chains.</text>
</comment>
<comment type="tissue specificity">
    <text>Red blood cells.</text>
</comment>
<comment type="similarity">
    <text evidence="3">Belongs to the globin family.</text>
</comment>
<reference key="1">
    <citation type="journal article" date="1986" name="Biol. Chem. Hoppe-Seyler">
        <title>Amino-acid sequence of the alpha and beta chains of adult hemoglobin of the harbor seal, Phoca vitulina.</title>
        <authorList>
            <person name="Watanabe B."/>
            <person name="Maita T."/>
            <person name="Matsuda G."/>
            <person name="Goodman M."/>
            <person name="Johnson M.L."/>
        </authorList>
    </citation>
    <scope>PROTEIN SEQUENCE</scope>
</reference>
<protein>
    <recommendedName>
        <fullName>Hemoglobin subunit beta</fullName>
    </recommendedName>
    <alternativeName>
        <fullName>Beta-globin</fullName>
    </alternativeName>
    <alternativeName>
        <fullName>Hemoglobin beta chain</fullName>
    </alternativeName>
</protein>
<accession>P09909</accession>
<organism>
    <name type="scientific">Phoca vitulina</name>
    <name type="common">Harbor seal</name>
    <dbReference type="NCBI Taxonomy" id="9720"/>
    <lineage>
        <taxon>Eukaryota</taxon>
        <taxon>Metazoa</taxon>
        <taxon>Chordata</taxon>
        <taxon>Craniata</taxon>
        <taxon>Vertebrata</taxon>
        <taxon>Euteleostomi</taxon>
        <taxon>Mammalia</taxon>
        <taxon>Eutheria</taxon>
        <taxon>Laurasiatheria</taxon>
        <taxon>Carnivora</taxon>
        <taxon>Caniformia</taxon>
        <taxon>Pinnipedia</taxon>
        <taxon>Phocidae</taxon>
        <taxon>Phocinae</taxon>
        <taxon>Phoca</taxon>
    </lineage>
</organism>
<evidence type="ECO:0000250" key="1">
    <source>
        <dbReference type="UniProtKB" id="P02086"/>
    </source>
</evidence>
<evidence type="ECO:0000250" key="2">
    <source>
        <dbReference type="UniProtKB" id="P68871"/>
    </source>
</evidence>
<evidence type="ECO:0000255" key="3">
    <source>
        <dbReference type="PROSITE-ProRule" id="PRU00238"/>
    </source>
</evidence>
<dbReference type="PIR" id="B25358">
    <property type="entry name" value="B25358"/>
</dbReference>
<dbReference type="SMR" id="P09909"/>
<dbReference type="GO" id="GO:0072562">
    <property type="term" value="C:blood microparticle"/>
    <property type="evidence" value="ECO:0007669"/>
    <property type="project" value="TreeGrafter"/>
</dbReference>
<dbReference type="GO" id="GO:0031838">
    <property type="term" value="C:haptoglobin-hemoglobin complex"/>
    <property type="evidence" value="ECO:0007669"/>
    <property type="project" value="TreeGrafter"/>
</dbReference>
<dbReference type="GO" id="GO:0005833">
    <property type="term" value="C:hemoglobin complex"/>
    <property type="evidence" value="ECO:0007669"/>
    <property type="project" value="InterPro"/>
</dbReference>
<dbReference type="GO" id="GO:0031720">
    <property type="term" value="F:haptoglobin binding"/>
    <property type="evidence" value="ECO:0007669"/>
    <property type="project" value="TreeGrafter"/>
</dbReference>
<dbReference type="GO" id="GO:0020037">
    <property type="term" value="F:heme binding"/>
    <property type="evidence" value="ECO:0007669"/>
    <property type="project" value="InterPro"/>
</dbReference>
<dbReference type="GO" id="GO:0031721">
    <property type="term" value="F:hemoglobin alpha binding"/>
    <property type="evidence" value="ECO:0007669"/>
    <property type="project" value="TreeGrafter"/>
</dbReference>
<dbReference type="GO" id="GO:0046872">
    <property type="term" value="F:metal ion binding"/>
    <property type="evidence" value="ECO:0007669"/>
    <property type="project" value="UniProtKB-KW"/>
</dbReference>
<dbReference type="GO" id="GO:0043177">
    <property type="term" value="F:organic acid binding"/>
    <property type="evidence" value="ECO:0007669"/>
    <property type="project" value="TreeGrafter"/>
</dbReference>
<dbReference type="GO" id="GO:0019825">
    <property type="term" value="F:oxygen binding"/>
    <property type="evidence" value="ECO:0007669"/>
    <property type="project" value="InterPro"/>
</dbReference>
<dbReference type="GO" id="GO:0005344">
    <property type="term" value="F:oxygen carrier activity"/>
    <property type="evidence" value="ECO:0007669"/>
    <property type="project" value="UniProtKB-KW"/>
</dbReference>
<dbReference type="GO" id="GO:0004601">
    <property type="term" value="F:peroxidase activity"/>
    <property type="evidence" value="ECO:0007669"/>
    <property type="project" value="TreeGrafter"/>
</dbReference>
<dbReference type="GO" id="GO:0042744">
    <property type="term" value="P:hydrogen peroxide catabolic process"/>
    <property type="evidence" value="ECO:0007669"/>
    <property type="project" value="TreeGrafter"/>
</dbReference>
<dbReference type="CDD" id="cd08925">
    <property type="entry name" value="Hb-beta-like"/>
    <property type="match status" value="1"/>
</dbReference>
<dbReference type="FunFam" id="1.10.490.10:FF:000001">
    <property type="entry name" value="Hemoglobin subunit beta"/>
    <property type="match status" value="1"/>
</dbReference>
<dbReference type="Gene3D" id="1.10.490.10">
    <property type="entry name" value="Globins"/>
    <property type="match status" value="1"/>
</dbReference>
<dbReference type="InterPro" id="IPR000971">
    <property type="entry name" value="Globin"/>
</dbReference>
<dbReference type="InterPro" id="IPR009050">
    <property type="entry name" value="Globin-like_sf"/>
</dbReference>
<dbReference type="InterPro" id="IPR012292">
    <property type="entry name" value="Globin/Proto"/>
</dbReference>
<dbReference type="InterPro" id="IPR002337">
    <property type="entry name" value="Hemoglobin_b"/>
</dbReference>
<dbReference type="InterPro" id="IPR050056">
    <property type="entry name" value="Hemoglobin_oxygen_transport"/>
</dbReference>
<dbReference type="PANTHER" id="PTHR11442">
    <property type="entry name" value="HEMOGLOBIN FAMILY MEMBER"/>
    <property type="match status" value="1"/>
</dbReference>
<dbReference type="PANTHER" id="PTHR11442:SF42">
    <property type="entry name" value="HEMOGLOBIN SUBUNIT BETA"/>
    <property type="match status" value="1"/>
</dbReference>
<dbReference type="Pfam" id="PF00042">
    <property type="entry name" value="Globin"/>
    <property type="match status" value="1"/>
</dbReference>
<dbReference type="PRINTS" id="PR00814">
    <property type="entry name" value="BETAHAEM"/>
</dbReference>
<dbReference type="SUPFAM" id="SSF46458">
    <property type="entry name" value="Globin-like"/>
    <property type="match status" value="1"/>
</dbReference>
<dbReference type="PROSITE" id="PS01033">
    <property type="entry name" value="GLOBIN"/>
    <property type="match status" value="1"/>
</dbReference>
<sequence>VHLTGEEKSAVTALWGKVNVDEVGGEALGRLLVVYPWTQRFFDSFGDLSSADAIMGNPKVKAHGKKVLNSFSDGLKNLDNLKGTFAKLSELHCDKLHVDPENFKLLGNVLVCVLAHHFGKEFTPQVQAAYQKVVAGVANALAHKYH</sequence>
<proteinExistence type="evidence at protein level"/>
<gene>
    <name type="primary">HBB</name>
</gene>